<accession>P81122</accession>
<accession>B9EJW3</accession>
<comment type="function">
    <text evidence="2 8">Signaling adapter protein that participates in the signal transduction from two prominent receptor tyrosine kinases, insulin receptor/INSR and insulin-like growth factor I receptor/IGF1R. Plays therefore an important role in development, growth, glucose homeostasis as well as lipid metabolism (PubMed:9495343, PubMed:25830382). Upon phosphorylation by the insulin receptor, functions as a signaling scaffold that propagates insulin action through binding to SH2 domain-containing proteins including the p85 regulatory subunit of PI3K, NCK1, NCK2, GRB2 or SHP2 (By similarity). Recruitment of GRB2 leads to the activation of the guanine nucleotide exchange factor SOS1 which in turn triggers the Ras/Raf/MEK/MAPK signaling cascade (By similarity). Activation of the PI3K/AKT pathway is responsible for most of insulin metabolic effects in the cell, and the Ras/Raf/MEK/MAPK is involved in the regulation of gene expression and in cooperation with the PI3K pathway regulates cell growth and differentiation (PubMed:25830382). Acts a positive regulator of the Wnt/beta-catenin signaling pathway through suppression of DVL2 autophagy-mediated degradation leading to cell proliferation. Plays a role in cell cycle progression by promoting a robust spindle assembly checkpoint (SAC) during M-phase. In macrophages, IL4-induced tyrosine phosphorylation of IRS2 leads to the recruitment and activation of phosphoinositide 3-kinase (PI3K) (By similarity).</text>
</comment>
<comment type="subunit">
    <text evidence="2">Interacts with PHIP. Interacts with SH2B1; this interaction enhances leptin-induced activation of the PI3-kinase pathway. Interacts with GRB2. Interacts with PIK3R1. Interacts with DVL2; this interaction promotes the Wnt/beta-catenin signaling pathway.</text>
</comment>
<comment type="interaction">
    <interactant intactId="EBI-1369862">
        <id>P81122</id>
    </interactant>
    <interactant intactId="EBI-1802585">
        <id>Q923E4</id>
        <label>Sirt1</label>
    </interactant>
    <organismsDiffer>false</organismsDiffer>
    <experiments>2</experiments>
</comment>
<comment type="interaction">
    <interactant intactId="EBI-1369862">
        <id>P81122</id>
    </interactant>
    <interactant intactId="EBI-15558981">
        <id>P06213-1</id>
        <label>INSR</label>
    </interactant>
    <organismsDiffer>true</organismsDiffer>
    <experiments>8</experiments>
</comment>
<comment type="subcellular location">
    <subcellularLocation>
        <location evidence="6 7">Cytoplasm</location>
        <location evidence="6 7">Cytosol</location>
    </subcellularLocation>
</comment>
<comment type="tissue specificity">
    <text>Skeletal muscle, lung, brain, liver, kidney, heart and spleen.</text>
</comment>
<comment type="PTM">
    <text evidence="2 7">Phosphorylation fluctuates in a cell-cycle dependent manner with hyperphosphorylation during mitosis (By similarity). Phosphorylated at Ser-556 and Ser-1098 by PLK1; these phosphorylations prevent the activation of the PI3K pathway upon growth factor stimulation by inhibiting the binding between IRS2 and the PI3K pathway components and increasing the level of IRS2 protein degradation. In addition, they prevent premature mitotic exit (PubMed:25830382).</text>
</comment>
<comment type="PTM">
    <text evidence="2">Monoubiquitinated by NEDD4; leading to enhanced IGF1 signaling. During cell cycle, ubiquitination and proteasomal degradation are controlled by FZR1.</text>
</comment>
<comment type="disruption phenotype">
    <text evidence="8">IRS2-deletion neonates are 10% smaller than wild-type littermates, and this small difference in weight persists during weaning and into adult life. Deletion mice show marked abnormalities in glucose homeostasis but minimal growth defects. IRS2 deletion causes the progressive development of a type 2 diabetic phenotype.</text>
</comment>
<sequence length="1321" mass="136763">MASAPLPGPPASAGGDGPNLNNNNNNNNHSVRKCGYLRKQKHGHKRFFVLRGPGTGGDEASAAGGSPPQPPRLEYYESEKKWRSKAGAPKRVIALDCCLNINKRADAKHKYLIALYTKDEYFAVAAENEQEQEGWYRALTDLVSEGRSGEGGSGTTGGSCSASLPGVLGGSAGAAGCDDNYGLVTPATAVYREVWQVNLKPKGLGQSKNLTGVYRLCLSARTIGFVKLNCEQPSVTLQLMNIRRCGHSDSFFFIEVGRSAVTGPGELWMQADDSVVAQNIHETILEAMKALKELFEFRPRSKSQSSGSSATHPISVPGARRHHHLVNLPPSQTGLVRRSRTDSLAATPPAAKCTSCRVRTASEGDGGAAGGAGTAGGRPMSVAGSPLSPGPVRAPLSRSHTLSAGCGGRPSKVTLAPAGGALQHSRSMSMPVAHSPPAATSPGSLSSSSGHGSGSYPLPPGSHPHLPHPLHHPQGQRPSSGSASASGSPSDPGFMSLDEYGSSPGDLRAFSSHRSNTPESIAETPPARDGSGGELYGYMSMDRPLSHCGRPYRRVSGDGAQDLDRGLRKRTYSLTTPARQRQVPQPSSASLDEYTLMRATFSGSSGRLCPSFPASSPKVAYNPYPEDYGDIEIGSHKSSSSNLGADDGYMPMTPGAALRSGGPNSCKSDDYMPMSPTSVSAPKQILQPRLAAALPPSGAAVPAPPSGVGRTFPVNGGGYKASSPAESSPEDSGYMRMWCGSKLSMENPDPKLLPNGDYLNMSPSEAGTAGTPPDFSAALRGGSEGLKGIPGHCYSSLPRSYKAPCSCSGDNDQYVLMSSPVGRILEEERLEPQATPGAGTFGAAGGSHTQPHHSAVPSSMRPSAIGGRPEGFLGQRCRAVRPTRLSLEGLQTLPSMQEYPLPTEPKSPGEYINIDFGEAGTRLSPPAPPLLASAASSSSLLSASSPASSLGSGTPGTSSDSRQRSPLSDYMNLDFSSPKSPKPSTRSGDTVGSMDGLLSPEASSPYPPLPPRPSTSPSSLQQPLPPAPGDLYRLPPASAATSQGPTAGSSMSSEPGDNGDYTEMAFGVAATPPQPIVAPPKPEGARVASPTSGLKRLSLMDQVSGVEAFLQVSQPPDPHRGAKVIRADPQGGRRRHSSETFSSTTTVTPVSPSFAHNSKRHNSASVENVSLRKSSEGSSTLGGGDEPPTSPGQAQPLVAVPPVPQARPWNPGQPGALIGCPGGSSSPMRRETSVGFQNGLNYIAIDVRGEQGSLAQSQPQPGDKNSWSRTRSLGGLLGTVGGSGASGVCGGPGTGALPSASTYASIDFLSHHLKEATVVKE</sequence>
<name>IRS2_MOUSE</name>
<feature type="chain" id="PRO_0000084240" description="Insulin receptor substrate 2">
    <location>
        <begin position="1"/>
        <end position="1321"/>
    </location>
</feature>
<feature type="domain" description="PH" evidence="3">
    <location>
        <begin position="16"/>
        <end position="144"/>
    </location>
</feature>
<feature type="domain" description="IRS-type PTB" evidence="4">
    <location>
        <begin position="191"/>
        <end position="295"/>
    </location>
</feature>
<feature type="region of interest" description="Disordered" evidence="5">
    <location>
        <begin position="1"/>
        <end position="32"/>
    </location>
</feature>
<feature type="region of interest" description="Disordered" evidence="5">
    <location>
        <begin position="51"/>
        <end position="73"/>
    </location>
</feature>
<feature type="region of interest" description="Disordered" evidence="5">
    <location>
        <begin position="299"/>
        <end position="536"/>
    </location>
</feature>
<feature type="region of interest" description="Disordered" evidence="5">
    <location>
        <begin position="834"/>
        <end position="871"/>
    </location>
</feature>
<feature type="region of interest" description="Disordered" evidence="5">
    <location>
        <begin position="888"/>
        <end position="1091"/>
    </location>
</feature>
<feature type="region of interest" description="Disordered" evidence="5">
    <location>
        <begin position="1110"/>
        <end position="1198"/>
    </location>
</feature>
<feature type="region of interest" description="Disordered" evidence="5">
    <location>
        <begin position="1251"/>
        <end position="1275"/>
    </location>
</feature>
<feature type="short sequence motif" description="YXXM motif 1">
    <location>
        <begin position="536"/>
        <end position="539"/>
    </location>
</feature>
<feature type="short sequence motif" description="YXXM motif 2">
    <location>
        <begin position="594"/>
        <end position="597"/>
    </location>
</feature>
<feature type="short sequence motif" description="YXXM motif 3">
    <location>
        <begin position="649"/>
        <end position="652"/>
    </location>
</feature>
<feature type="short sequence motif" description="YXXM motif 4">
    <location>
        <begin position="671"/>
        <end position="674"/>
    </location>
</feature>
<feature type="short sequence motif" description="YXXM motif 5">
    <location>
        <begin position="734"/>
        <end position="737"/>
    </location>
</feature>
<feature type="short sequence motif" description="YXXM motif 6">
    <location>
        <begin position="814"/>
        <end position="817"/>
    </location>
</feature>
<feature type="short sequence motif" description="YXXM motif 7">
    <location>
        <begin position="1061"/>
        <end position="1064"/>
    </location>
</feature>
<feature type="compositionally biased region" description="Pro residues" evidence="5">
    <location>
        <begin position="1"/>
        <end position="10"/>
    </location>
</feature>
<feature type="compositionally biased region" description="Low complexity" evidence="5">
    <location>
        <begin position="18"/>
        <end position="28"/>
    </location>
</feature>
<feature type="compositionally biased region" description="Gly residues" evidence="5">
    <location>
        <begin position="364"/>
        <end position="376"/>
    </location>
</feature>
<feature type="compositionally biased region" description="Low complexity" evidence="5">
    <location>
        <begin position="435"/>
        <end position="456"/>
    </location>
</feature>
<feature type="compositionally biased region" description="Low complexity" evidence="5">
    <location>
        <begin position="478"/>
        <end position="490"/>
    </location>
</feature>
<feature type="compositionally biased region" description="Low complexity" evidence="5">
    <location>
        <begin position="930"/>
        <end position="959"/>
    </location>
</feature>
<feature type="compositionally biased region" description="Pro residues" evidence="5">
    <location>
        <begin position="1005"/>
        <end position="1014"/>
    </location>
</feature>
<feature type="compositionally biased region" description="Polar residues" evidence="5">
    <location>
        <begin position="1039"/>
        <end position="1055"/>
    </location>
</feature>
<feature type="compositionally biased region" description="Pro residues" evidence="5">
    <location>
        <begin position="1072"/>
        <end position="1082"/>
    </location>
</feature>
<feature type="compositionally biased region" description="Low complexity" evidence="5">
    <location>
        <begin position="1139"/>
        <end position="1154"/>
    </location>
</feature>
<feature type="compositionally biased region" description="Polar residues" evidence="5">
    <location>
        <begin position="1163"/>
        <end position="1179"/>
    </location>
</feature>
<feature type="compositionally biased region" description="Polar residues" evidence="5">
    <location>
        <begin position="1253"/>
        <end position="1271"/>
    </location>
</feature>
<feature type="modified residue" description="Phosphoserine" evidence="2">
    <location>
        <position position="303"/>
    </location>
</feature>
<feature type="modified residue" description="Phosphoserine" evidence="2">
    <location>
        <position position="343"/>
    </location>
</feature>
<feature type="modified residue" description="Phosphothreonine" evidence="2">
    <location>
        <position position="347"/>
    </location>
</feature>
<feature type="modified residue" description="Phosphoserine" evidence="2">
    <location>
        <position position="362"/>
    </location>
</feature>
<feature type="modified residue" description="Phosphoserine" evidence="2">
    <location>
        <position position="381"/>
    </location>
</feature>
<feature type="modified residue" description="Phosphoserine" evidence="11">
    <location>
        <position position="385"/>
    </location>
</feature>
<feature type="modified residue" description="Phosphoserine" evidence="11">
    <location>
        <position position="388"/>
    </location>
</feature>
<feature type="modified residue" description="Omega-N-methylarginine" evidence="2">
    <location>
        <position position="409"/>
    </location>
</feature>
<feature type="modified residue" description="Phosphothreonine" evidence="2">
    <location>
        <position position="517"/>
    </location>
</feature>
<feature type="modified residue" description="Phosphoserine" evidence="2">
    <location>
        <position position="520"/>
    </location>
</feature>
<feature type="modified residue" description="Phosphothreonine" evidence="11">
    <location>
        <position position="524"/>
    </location>
</feature>
<feature type="modified residue" description="Phosphotyrosine; by INSR" evidence="1">
    <location>
        <position position="536"/>
    </location>
</feature>
<feature type="modified residue" description="Phosphoserine; by PLK1" evidence="7">
    <location>
        <position position="556"/>
    </location>
</feature>
<feature type="modified residue" description="Phosphoserine" evidence="2">
    <location>
        <position position="573"/>
    </location>
</feature>
<feature type="modified residue" description="Phosphothreonine" evidence="2">
    <location>
        <position position="575"/>
    </location>
</feature>
<feature type="modified residue" description="Phosphothreonine" evidence="2">
    <location>
        <position position="576"/>
    </location>
</feature>
<feature type="modified residue" description="Phosphoserine" evidence="2">
    <location>
        <position position="590"/>
    </location>
</feature>
<feature type="modified residue" description="Phosphoserine" evidence="2">
    <location>
        <position position="604"/>
    </location>
</feature>
<feature type="modified residue" description="Phosphoserine" evidence="2">
    <location>
        <position position="616"/>
    </location>
</feature>
<feature type="modified residue" description="Phosphotyrosine" evidence="10">
    <location>
        <position position="649"/>
    </location>
</feature>
<feature type="modified residue" description="Phosphotyrosine; by INSR" evidence="2">
    <location>
        <position position="671"/>
    </location>
</feature>
<feature type="modified residue" description="Phosphoserine" evidence="2">
    <location>
        <position position="675"/>
    </location>
</feature>
<feature type="modified residue" description="Phosphoserine" evidence="2">
    <location>
        <position position="678"/>
    </location>
</feature>
<feature type="modified residue" description="Phosphoserine" evidence="2">
    <location>
        <position position="727"/>
    </location>
</feature>
<feature type="modified residue" description="Phosphoserine" evidence="11">
    <location>
        <position position="728"/>
    </location>
</feature>
<feature type="modified residue" description="Phosphoserine" evidence="2">
    <location>
        <position position="762"/>
    </location>
</feature>
<feature type="modified residue" description="Phosphothreonine" evidence="2">
    <location>
        <position position="771"/>
    </location>
</feature>
<feature type="modified residue" description="Phosphoserine" evidence="2">
    <location>
        <position position="796"/>
    </location>
</feature>
<feature type="modified residue" description="Phosphoserine" evidence="2">
    <location>
        <position position="819"/>
    </location>
</feature>
<feature type="modified residue" description="Phosphoserine" evidence="11">
    <location>
        <position position="907"/>
    </location>
</feature>
<feature type="modified residue" description="Phosphotyrosine; by INSR" evidence="1">
    <location>
        <position position="911"/>
    </location>
</feature>
<feature type="modified residue" description="Phosphoserine" evidence="2">
    <location>
        <position position="965"/>
    </location>
</feature>
<feature type="modified residue" description="Phosphotyrosine; by INSR" evidence="1">
    <location>
        <position position="970"/>
    </location>
</feature>
<feature type="modified residue" description="Phosphothreonine" evidence="2">
    <location>
        <position position="1071"/>
    </location>
</feature>
<feature type="modified residue" description="Phosphoserine" evidence="2">
    <location>
        <position position="1089"/>
    </location>
</feature>
<feature type="modified residue" description="Phosphoserine; by PLK1" evidence="7">
    <location>
        <position position="1098"/>
    </location>
</feature>
<feature type="modified residue" description="Phosphothreonine" evidence="2">
    <location>
        <position position="1148"/>
    </location>
</feature>
<feature type="modified residue" description="Phosphoserine" evidence="11">
    <location>
        <position position="1151"/>
    </location>
</feature>
<feature type="modified residue" description="Phosphoserine" evidence="2">
    <location>
        <position position="1163"/>
    </location>
</feature>
<feature type="modified residue" description="Phosphoserine" evidence="11">
    <location>
        <position position="1165"/>
    </location>
</feature>
<feature type="modified residue" description="Phosphoserine" evidence="2">
    <location>
        <position position="1175"/>
    </location>
</feature>
<feature type="modified residue" description="Phosphoserine" evidence="2">
    <location>
        <position position="1190"/>
    </location>
</feature>
<feature type="modified residue" description="Phosphotyrosine; by INSR" evidence="1">
    <location>
        <position position="1242"/>
    </location>
</feature>
<feature type="modified residue" description="Phosphotyrosine; by INSR" evidence="1">
    <location>
        <position position="1303"/>
    </location>
</feature>
<feature type="cross-link" description="Glycyl lysine isopeptide (Lys-Gly) (interchain with G-Cter in ubiquitin)" evidence="2">
    <location>
        <position position="1314"/>
    </location>
</feature>
<feature type="sequence conflict" description="In Ref. 1; no nucleotide entry." evidence="9" ref="1">
    <original>A</original>
    <variation>G</variation>
    <location>
        <position position="13"/>
    </location>
</feature>
<feature type="sequence conflict" description="In Ref. 1; no nucleotide entry." evidence="9" ref="1">
    <original>Q</original>
    <variation>G</variation>
    <location>
        <position position="232"/>
    </location>
</feature>
<feature type="sequence conflict" description="In Ref. 1; no nucleotide entry." evidence="9" ref="1">
    <original>M</original>
    <variation>N</variation>
    <location>
        <position position="240"/>
    </location>
</feature>
<feature type="sequence conflict" description="In Ref. 1; no nucleotide entry." evidence="9" ref="1">
    <original>M</original>
    <variation>N</variation>
    <location>
        <position position="428"/>
    </location>
</feature>
<feature type="sequence conflict" description="In Ref. 1; no nucleotide entry." evidence="9" ref="1">
    <original>M</original>
    <variation>K</variation>
    <location>
        <position position="761"/>
    </location>
</feature>
<feature type="sequence conflict" description="In Ref. 1; no nucleotide entry." evidence="9" ref="1">
    <original>F</original>
    <variation>P</variation>
    <location>
        <position position="916"/>
    </location>
</feature>
<feature type="sequence conflict" description="In Ref. 1; no nucleotide entry." evidence="9" ref="1">
    <original>F</original>
    <variation>P</variation>
    <location>
        <position position="975"/>
    </location>
</feature>
<feature type="sequence conflict" description="In Ref. 1; no nucleotide entry." evidence="9" ref="1">
    <original>T</original>
    <variation>S</variation>
    <location>
        <position position="1062"/>
    </location>
</feature>
<feature type="helix" evidence="12">
    <location>
        <begin position="625"/>
        <end position="627"/>
    </location>
</feature>
<feature type="strand" evidence="12">
    <location>
        <begin position="629"/>
        <end position="633"/>
    </location>
</feature>
<evidence type="ECO:0000250" key="1"/>
<evidence type="ECO:0000250" key="2">
    <source>
        <dbReference type="UniProtKB" id="Q9Y4H2"/>
    </source>
</evidence>
<evidence type="ECO:0000255" key="3">
    <source>
        <dbReference type="PROSITE-ProRule" id="PRU00145"/>
    </source>
</evidence>
<evidence type="ECO:0000255" key="4">
    <source>
        <dbReference type="PROSITE-ProRule" id="PRU00389"/>
    </source>
</evidence>
<evidence type="ECO:0000256" key="5">
    <source>
        <dbReference type="SAM" id="MobiDB-lite"/>
    </source>
</evidence>
<evidence type="ECO:0000269" key="6">
    <source>
    </source>
</evidence>
<evidence type="ECO:0000269" key="7">
    <source>
    </source>
</evidence>
<evidence type="ECO:0000269" key="8">
    <source>
    </source>
</evidence>
<evidence type="ECO:0000305" key="9"/>
<evidence type="ECO:0007744" key="10">
    <source>
    </source>
</evidence>
<evidence type="ECO:0007744" key="11">
    <source>
    </source>
</evidence>
<evidence type="ECO:0007829" key="12">
    <source>
        <dbReference type="PDB" id="3BU3"/>
    </source>
</evidence>
<gene>
    <name type="primary">Irs2</name>
</gene>
<dbReference type="EMBL" id="BC147580">
    <property type="protein sequence ID" value="AAI47581.1"/>
    <property type="molecule type" value="mRNA"/>
</dbReference>
<dbReference type="CCDS" id="CCDS52477.1"/>
<dbReference type="RefSeq" id="NP_001074681.1">
    <property type="nucleotide sequence ID" value="NM_001081212.2"/>
</dbReference>
<dbReference type="PDB" id="3BU3">
    <property type="method" value="X-ray"/>
    <property type="resolution" value="1.65 A"/>
    <property type="chains" value="B=620-634"/>
</dbReference>
<dbReference type="PDB" id="3BU5">
    <property type="method" value="X-ray"/>
    <property type="resolution" value="2.10 A"/>
    <property type="chains" value="B=620-634"/>
</dbReference>
<dbReference type="PDB" id="3BU6">
    <property type="method" value="X-ray"/>
    <property type="resolution" value="1.95 A"/>
    <property type="chains" value="B=620-634"/>
</dbReference>
<dbReference type="PDBsum" id="3BU3"/>
<dbReference type="PDBsum" id="3BU5"/>
<dbReference type="PDBsum" id="3BU6"/>
<dbReference type="SMR" id="P81122"/>
<dbReference type="BioGRID" id="239306">
    <property type="interactions" value="4"/>
</dbReference>
<dbReference type="CORUM" id="P81122"/>
<dbReference type="DIP" id="DIP-39500N"/>
<dbReference type="FunCoup" id="P81122">
    <property type="interactions" value="807"/>
</dbReference>
<dbReference type="IntAct" id="P81122">
    <property type="interactions" value="7"/>
</dbReference>
<dbReference type="MINT" id="P81122"/>
<dbReference type="STRING" id="10090.ENSMUSP00000038514"/>
<dbReference type="GlyGen" id="P81122">
    <property type="glycosylation" value="10 sites, 1 N-linked glycan (1 site), 1 O-linked glycan (5 sites)"/>
</dbReference>
<dbReference type="iPTMnet" id="P81122"/>
<dbReference type="PhosphoSitePlus" id="P81122"/>
<dbReference type="jPOST" id="P81122"/>
<dbReference type="PaxDb" id="10090-ENSMUSP00000038514"/>
<dbReference type="PeptideAtlas" id="P81122"/>
<dbReference type="ProteomicsDB" id="269334"/>
<dbReference type="Pumba" id="P81122"/>
<dbReference type="Antibodypedia" id="25473">
    <property type="antibodies" value="350 antibodies from 37 providers"/>
</dbReference>
<dbReference type="DNASU" id="384783"/>
<dbReference type="Ensembl" id="ENSMUST00000040514.8">
    <property type="protein sequence ID" value="ENSMUSP00000038514.7"/>
    <property type="gene ID" value="ENSMUSG00000038894.8"/>
</dbReference>
<dbReference type="GeneID" id="384783"/>
<dbReference type="KEGG" id="mmu:384783"/>
<dbReference type="UCSC" id="uc009kuz.1">
    <property type="organism name" value="mouse"/>
</dbReference>
<dbReference type="AGR" id="MGI:109334"/>
<dbReference type="CTD" id="8660"/>
<dbReference type="MGI" id="MGI:109334">
    <property type="gene designation" value="Irs2"/>
</dbReference>
<dbReference type="VEuPathDB" id="HostDB:ENSMUSG00000038894"/>
<dbReference type="eggNOG" id="ENOG502QUNU">
    <property type="taxonomic scope" value="Eukaryota"/>
</dbReference>
<dbReference type="GeneTree" id="ENSGT00940000161407"/>
<dbReference type="HOGENOM" id="CLU_004902_1_0_1"/>
<dbReference type="InParanoid" id="P81122"/>
<dbReference type="OMA" id="CHRKRTY"/>
<dbReference type="OrthoDB" id="946068at2759"/>
<dbReference type="PhylomeDB" id="P81122"/>
<dbReference type="TreeFam" id="TF325994"/>
<dbReference type="Reactome" id="R-MMU-109704">
    <property type="pathway name" value="PI3K Cascade"/>
</dbReference>
<dbReference type="Reactome" id="R-MMU-112399">
    <property type="pathway name" value="IRS-mediated signalling"/>
</dbReference>
<dbReference type="Reactome" id="R-MMU-112412">
    <property type="pathway name" value="SOS-mediated signalling"/>
</dbReference>
<dbReference type="Reactome" id="R-MMU-1257604">
    <property type="pathway name" value="PIP3 activates AKT signaling"/>
</dbReference>
<dbReference type="Reactome" id="R-MMU-1266695">
    <property type="pathway name" value="Interleukin-7 signaling"/>
</dbReference>
<dbReference type="Reactome" id="R-MMU-198203">
    <property type="pathway name" value="PI3K/AKT activation"/>
</dbReference>
<dbReference type="Reactome" id="R-MMU-2428928">
    <property type="pathway name" value="IRS-related events triggered by IGF1R"/>
</dbReference>
<dbReference type="Reactome" id="R-MMU-5673001">
    <property type="pathway name" value="RAF/MAP kinase cascade"/>
</dbReference>
<dbReference type="Reactome" id="R-MMU-6811558">
    <property type="pathway name" value="PI5P, PP2A and IER3 Regulate PI3K/AKT Signaling"/>
</dbReference>
<dbReference type="Reactome" id="R-MMU-74713">
    <property type="pathway name" value="IRS activation"/>
</dbReference>
<dbReference type="Reactome" id="R-MMU-74749">
    <property type="pathway name" value="Signal attenuation"/>
</dbReference>
<dbReference type="Reactome" id="R-MMU-8853659">
    <property type="pathway name" value="RET signaling"/>
</dbReference>
<dbReference type="Reactome" id="R-MMU-9006335">
    <property type="pathway name" value="Signaling by Erythropoietin"/>
</dbReference>
<dbReference type="Reactome" id="R-MMU-9027276">
    <property type="pathway name" value="Erythropoietin activates Phosphoinositide-3-kinase (PI3K)"/>
</dbReference>
<dbReference type="Reactome" id="R-MMU-9027284">
    <property type="pathway name" value="Erythropoietin activates RAS"/>
</dbReference>
<dbReference type="BioGRID-ORCS" id="384783">
    <property type="hits" value="5 hits in 77 CRISPR screens"/>
</dbReference>
<dbReference type="ChiTaRS" id="Irs2">
    <property type="organism name" value="mouse"/>
</dbReference>
<dbReference type="EvolutionaryTrace" id="P81122"/>
<dbReference type="PRO" id="PR:P81122"/>
<dbReference type="Proteomes" id="UP000000589">
    <property type="component" value="Chromosome 8"/>
</dbReference>
<dbReference type="RNAct" id="P81122">
    <property type="molecule type" value="protein"/>
</dbReference>
<dbReference type="Bgee" id="ENSMUSG00000038894">
    <property type="expression patterns" value="Expressed in digit skin and 142 other cell types or tissues"/>
</dbReference>
<dbReference type="GO" id="GO:0005829">
    <property type="term" value="C:cytosol"/>
    <property type="evidence" value="ECO:0000314"/>
    <property type="project" value="MGI"/>
</dbReference>
<dbReference type="GO" id="GO:0005886">
    <property type="term" value="C:plasma membrane"/>
    <property type="evidence" value="ECO:0000314"/>
    <property type="project" value="MGI"/>
</dbReference>
<dbReference type="GO" id="GO:0071889">
    <property type="term" value="F:14-3-3 protein binding"/>
    <property type="evidence" value="ECO:0007669"/>
    <property type="project" value="Ensembl"/>
</dbReference>
<dbReference type="GO" id="GO:0005158">
    <property type="term" value="F:insulin receptor binding"/>
    <property type="evidence" value="ECO:0007669"/>
    <property type="project" value="Ensembl"/>
</dbReference>
<dbReference type="GO" id="GO:0141038">
    <property type="term" value="F:phosphatidylinositol 3-kinase activator activity"/>
    <property type="evidence" value="ECO:0000315"/>
    <property type="project" value="MGI"/>
</dbReference>
<dbReference type="GO" id="GO:0043548">
    <property type="term" value="F:phosphatidylinositol 3-kinase binding"/>
    <property type="evidence" value="ECO:0000314"/>
    <property type="project" value="MGI"/>
</dbReference>
<dbReference type="GO" id="GO:0019904">
    <property type="term" value="F:protein domain specific binding"/>
    <property type="evidence" value="ECO:0007669"/>
    <property type="project" value="Ensembl"/>
</dbReference>
<dbReference type="GO" id="GO:0019901">
    <property type="term" value="F:protein kinase binding"/>
    <property type="evidence" value="ECO:0000314"/>
    <property type="project" value="MGI"/>
</dbReference>
<dbReference type="GO" id="GO:0019903">
    <property type="term" value="F:protein phosphatase binding"/>
    <property type="evidence" value="ECO:0007669"/>
    <property type="project" value="Ensembl"/>
</dbReference>
<dbReference type="GO" id="GO:0030674">
    <property type="term" value="F:protein-macromolecule adaptor activity"/>
    <property type="evidence" value="ECO:0000314"/>
    <property type="project" value="MGI"/>
</dbReference>
<dbReference type="GO" id="GO:0005068">
    <property type="term" value="F:transmembrane receptor protein tyrosine kinase adaptor activity"/>
    <property type="evidence" value="ECO:0000314"/>
    <property type="project" value="MGI"/>
</dbReference>
<dbReference type="GO" id="GO:0007420">
    <property type="term" value="P:brain development"/>
    <property type="evidence" value="ECO:0000315"/>
    <property type="project" value="MGI"/>
</dbReference>
<dbReference type="GO" id="GO:0016477">
    <property type="term" value="P:cell migration"/>
    <property type="evidence" value="ECO:0000316"/>
    <property type="project" value="MGI"/>
</dbReference>
<dbReference type="GO" id="GO:0008283">
    <property type="term" value="P:cell population proliferation"/>
    <property type="evidence" value="ECO:0000315"/>
    <property type="project" value="MGI"/>
</dbReference>
<dbReference type="GO" id="GO:0071333">
    <property type="term" value="P:cellular response to glucose stimulus"/>
    <property type="evidence" value="ECO:0007669"/>
    <property type="project" value="Ensembl"/>
</dbReference>
<dbReference type="GO" id="GO:0032869">
    <property type="term" value="P:cellular response to insulin stimulus"/>
    <property type="evidence" value="ECO:0000314"/>
    <property type="project" value="MGI"/>
</dbReference>
<dbReference type="GO" id="GO:1901653">
    <property type="term" value="P:cellular response to peptide"/>
    <property type="evidence" value="ECO:0007669"/>
    <property type="project" value="Ensembl"/>
</dbReference>
<dbReference type="GO" id="GO:0010631">
    <property type="term" value="P:epithelial cell migration"/>
    <property type="evidence" value="ECO:0000316"/>
    <property type="project" value="MGI"/>
</dbReference>
<dbReference type="GO" id="GO:0008286">
    <property type="term" value="P:insulin receptor signaling pathway"/>
    <property type="evidence" value="ECO:0000314"/>
    <property type="project" value="MGI"/>
</dbReference>
<dbReference type="GO" id="GO:0048009">
    <property type="term" value="P:insulin-like growth factor receptor signaling pathway"/>
    <property type="evidence" value="ECO:0007669"/>
    <property type="project" value="Ensembl"/>
</dbReference>
<dbReference type="GO" id="GO:0030879">
    <property type="term" value="P:mammary gland development"/>
    <property type="evidence" value="ECO:0000316"/>
    <property type="project" value="MGI"/>
</dbReference>
<dbReference type="GO" id="GO:0002903">
    <property type="term" value="P:negative regulation of B cell apoptotic process"/>
    <property type="evidence" value="ECO:0000315"/>
    <property type="project" value="BHF-UCL"/>
</dbReference>
<dbReference type="GO" id="GO:0010748">
    <property type="term" value="P:negative regulation of long-chain fatty acid import across plasma membrane"/>
    <property type="evidence" value="ECO:0007669"/>
    <property type="project" value="Ensembl"/>
</dbReference>
<dbReference type="GO" id="GO:0030890">
    <property type="term" value="P:positive regulation of B cell proliferation"/>
    <property type="evidence" value="ECO:0000314"/>
    <property type="project" value="BHF-UCL"/>
</dbReference>
<dbReference type="GO" id="GO:0008284">
    <property type="term" value="P:positive regulation of cell population proliferation"/>
    <property type="evidence" value="ECO:0000315"/>
    <property type="project" value="MGI"/>
</dbReference>
<dbReference type="GO" id="GO:0046326">
    <property type="term" value="P:positive regulation of D-glucose import"/>
    <property type="evidence" value="ECO:0007669"/>
    <property type="project" value="Ensembl"/>
</dbReference>
<dbReference type="GO" id="GO:0010634">
    <property type="term" value="P:positive regulation of epithelial cell migration"/>
    <property type="evidence" value="ECO:0000316"/>
    <property type="project" value="MGI"/>
</dbReference>
<dbReference type="GO" id="GO:0032000">
    <property type="term" value="P:positive regulation of fatty acid beta-oxidation"/>
    <property type="evidence" value="ECO:0007669"/>
    <property type="project" value="Ensembl"/>
</dbReference>
<dbReference type="GO" id="GO:0045725">
    <property type="term" value="P:positive regulation of glycogen biosynthetic process"/>
    <property type="evidence" value="ECO:0007669"/>
    <property type="project" value="Ensembl"/>
</dbReference>
<dbReference type="GO" id="GO:0032024">
    <property type="term" value="P:positive regulation of insulin secretion"/>
    <property type="evidence" value="ECO:0000315"/>
    <property type="project" value="BHF-UCL"/>
</dbReference>
<dbReference type="GO" id="GO:0002053">
    <property type="term" value="P:positive regulation of mesenchymal cell proliferation"/>
    <property type="evidence" value="ECO:0000316"/>
    <property type="project" value="MGI"/>
</dbReference>
<dbReference type="GO" id="GO:0051897">
    <property type="term" value="P:positive regulation of phosphatidylinositol 3-kinase/protein kinase B signal transduction"/>
    <property type="evidence" value="ECO:0000315"/>
    <property type="project" value="MGI"/>
</dbReference>
<dbReference type="GO" id="GO:1904692">
    <property type="term" value="P:positive regulation of type B pancreatic cell proliferation"/>
    <property type="evidence" value="ECO:0000316"/>
    <property type="project" value="MGI"/>
</dbReference>
<dbReference type="GO" id="GO:0009749">
    <property type="term" value="P:response to glucose"/>
    <property type="evidence" value="ECO:0000314"/>
    <property type="project" value="BHF-UCL"/>
</dbReference>
<dbReference type="GO" id="GO:0044342">
    <property type="term" value="P:type B pancreatic cell proliferation"/>
    <property type="evidence" value="ECO:0000316"/>
    <property type="project" value="MGI"/>
</dbReference>
<dbReference type="CDD" id="cd01257">
    <property type="entry name" value="PH_IRS"/>
    <property type="match status" value="1"/>
</dbReference>
<dbReference type="CDD" id="cd01204">
    <property type="entry name" value="PTB_IRS"/>
    <property type="match status" value="1"/>
</dbReference>
<dbReference type="FunFam" id="2.30.29.30:FF:000029">
    <property type="entry name" value="Insulin receptor substrate 1"/>
    <property type="match status" value="1"/>
</dbReference>
<dbReference type="FunFam" id="2.30.29.30:FF:000291">
    <property type="entry name" value="insulin receptor substrate 2"/>
    <property type="match status" value="1"/>
</dbReference>
<dbReference type="Gene3D" id="2.30.29.30">
    <property type="entry name" value="Pleckstrin-homology domain (PH domain)/Phosphotyrosine-binding domain (PTB)"/>
    <property type="match status" value="2"/>
</dbReference>
<dbReference type="InterPro" id="IPR039011">
    <property type="entry name" value="IRS"/>
</dbReference>
<dbReference type="InterPro" id="IPR002404">
    <property type="entry name" value="IRS_PTB"/>
</dbReference>
<dbReference type="InterPro" id="IPR011993">
    <property type="entry name" value="PH-like_dom_sf"/>
</dbReference>
<dbReference type="InterPro" id="IPR001849">
    <property type="entry name" value="PH_domain"/>
</dbReference>
<dbReference type="PANTHER" id="PTHR10614">
    <property type="entry name" value="INSULIN RECEPTOR SUBSTRATE"/>
    <property type="match status" value="1"/>
</dbReference>
<dbReference type="PANTHER" id="PTHR10614:SF7">
    <property type="entry name" value="INSULIN RECEPTOR SUBSTRATE 2"/>
    <property type="match status" value="1"/>
</dbReference>
<dbReference type="Pfam" id="PF02174">
    <property type="entry name" value="IRS"/>
    <property type="match status" value="1"/>
</dbReference>
<dbReference type="Pfam" id="PF00169">
    <property type="entry name" value="PH"/>
    <property type="match status" value="1"/>
</dbReference>
<dbReference type="PRINTS" id="PR00628">
    <property type="entry name" value="INSULINRSI"/>
</dbReference>
<dbReference type="SMART" id="SM01244">
    <property type="entry name" value="IRS"/>
    <property type="match status" value="1"/>
</dbReference>
<dbReference type="SMART" id="SM00233">
    <property type="entry name" value="PH"/>
    <property type="match status" value="1"/>
</dbReference>
<dbReference type="SMART" id="SM00310">
    <property type="entry name" value="PTBI"/>
    <property type="match status" value="1"/>
</dbReference>
<dbReference type="SUPFAM" id="SSF50729">
    <property type="entry name" value="PH domain-like"/>
    <property type="match status" value="2"/>
</dbReference>
<dbReference type="PROSITE" id="PS51064">
    <property type="entry name" value="IRS_PTB"/>
    <property type="match status" value="1"/>
</dbReference>
<dbReference type="PROSITE" id="PS50003">
    <property type="entry name" value="PH_DOMAIN"/>
    <property type="match status" value="1"/>
</dbReference>
<protein>
    <recommendedName>
        <fullName>Insulin receptor substrate 2</fullName>
        <shortName>IRS-2</shortName>
    </recommendedName>
    <alternativeName>
        <fullName>4PS</fullName>
    </alternativeName>
</protein>
<keyword id="KW-0002">3D-structure</keyword>
<keyword id="KW-0963">Cytoplasm</keyword>
<keyword id="KW-0903">Direct protein sequencing</keyword>
<keyword id="KW-1017">Isopeptide bond</keyword>
<keyword id="KW-0488">Methylation</keyword>
<keyword id="KW-0597">Phosphoprotein</keyword>
<keyword id="KW-1185">Reference proteome</keyword>
<keyword id="KW-0807">Transducer</keyword>
<keyword id="KW-0832">Ubl conjugation</keyword>
<reference key="1">
    <citation type="journal article" date="1995" name="Nature">
        <title>Role of IRS-2 in insulin and cytokine signalling.</title>
        <authorList>
            <person name="Sun X.J."/>
            <person name="Wang L.-M."/>
            <person name="Zhang Y."/>
            <person name="Yenush L."/>
            <person name="Myers M.G. Jr."/>
            <person name="Glasheen E."/>
            <person name="Lane W.S."/>
            <person name="Pierce J.H."/>
            <person name="White M.F."/>
        </authorList>
    </citation>
    <scope>NUCLEOTIDE SEQUENCE</scope>
    <scope>PARTIAL PROTEIN SEQUENCE</scope>
</reference>
<reference key="2">
    <citation type="journal article" date="2004" name="Genome Res.">
        <title>The status, quality, and expansion of the NIH full-length cDNA project: the Mammalian Gene Collection (MGC).</title>
        <authorList>
            <consortium name="The MGC Project Team"/>
        </authorList>
    </citation>
    <scope>NUCLEOTIDE SEQUENCE [LARGE SCALE MRNA]</scope>
    <source>
        <tissue>Brain</tissue>
    </source>
</reference>
<reference key="3">
    <citation type="journal article" date="1998" name="Nature">
        <title>Disruption of IRS-2 causes type 2 diabetes in mice.</title>
        <authorList>
            <person name="Withers D.J."/>
            <person name="Gutierrez J.S."/>
            <person name="Towery H."/>
            <person name="Burks D.J."/>
            <person name="Ren J.M."/>
            <person name="Previs S."/>
            <person name="Zhang Y."/>
            <person name="Bernal D."/>
            <person name="Pons S."/>
            <person name="Shulman G.I."/>
            <person name="Bonner-Weir S."/>
            <person name="White M.F."/>
        </authorList>
    </citation>
    <scope>FUNCTION</scope>
    <scope>DISRUPTION PHENOTYPE</scope>
</reference>
<reference key="4">
    <citation type="journal article" date="2000" name="J. Biol. Chem.">
        <title>Cloning and characterization of PHIP, a novel insulin receptor substrate-1 pleckstrin homology domain interacting protein.</title>
        <authorList>
            <person name="Farhang-Fallah J."/>
            <person name="Yin X."/>
            <person name="Trentin G."/>
            <person name="Cheng A.M."/>
            <person name="Rozakis-Adcock M."/>
        </authorList>
    </citation>
    <scope>INTERACTION WITH PHIP</scope>
</reference>
<reference key="5">
    <citation type="journal article" date="2007" name="Mol. Cell. Biol.">
        <title>Identification of a WD40 repeat-containing isoform of PHIP as a novel regulator of beta-cell growth and survival.</title>
        <authorList>
            <person name="Podcheko A."/>
            <person name="Northcott P."/>
            <person name="Bikopoulos G."/>
            <person name="Lee A."/>
            <person name="Bommareddi S.R."/>
            <person name="Kushner J.A."/>
            <person name="Farhang-Fallah J."/>
            <person name="Rozakis-Adcock M."/>
        </authorList>
    </citation>
    <scope>SUBCELLULAR LOCATION</scope>
</reference>
<reference key="6">
    <citation type="journal article" date="2008" name="J. Proteome Res.">
        <title>Large-scale identification and evolution indexing of tyrosine phosphorylation sites from murine brain.</title>
        <authorList>
            <person name="Ballif B.A."/>
            <person name="Carey G.R."/>
            <person name="Sunyaev S.R."/>
            <person name="Gygi S.P."/>
        </authorList>
    </citation>
    <scope>PHOSPHORYLATION [LARGE SCALE ANALYSIS] AT TYR-649</scope>
    <scope>IDENTIFICATION BY MASS SPECTROMETRY [LARGE SCALE ANALYSIS]</scope>
    <source>
        <tissue>Brain</tissue>
    </source>
</reference>
<reference key="7">
    <citation type="journal article" date="2010" name="Cell">
        <title>A tissue-specific atlas of mouse protein phosphorylation and expression.</title>
        <authorList>
            <person name="Huttlin E.L."/>
            <person name="Jedrychowski M.P."/>
            <person name="Elias J.E."/>
            <person name="Goswami T."/>
            <person name="Rad R."/>
            <person name="Beausoleil S.A."/>
            <person name="Villen J."/>
            <person name="Haas W."/>
            <person name="Sowa M.E."/>
            <person name="Gygi S.P."/>
        </authorList>
    </citation>
    <scope>PHOSPHORYLATION [LARGE SCALE ANALYSIS] AT SER-385; SER-388; THR-524; SER-728; SER-907; SER-1151 AND SER-1165</scope>
    <scope>IDENTIFICATION BY MASS SPECTROMETRY [LARGE SCALE ANALYSIS]</scope>
    <source>
        <tissue>Brain</tissue>
        <tissue>Kidney</tissue>
        <tissue>Lung</tissue>
        <tissue>Spleen</tissue>
        <tissue>Testis</tissue>
    </source>
</reference>
<reference key="8">
    <citation type="journal article" date="2015" name="Biochemistry">
        <title>Plk1 phosphorylation of IRS2 prevents premature mitotic exit via AKT inactivation.</title>
        <authorList>
            <person name="Chen L."/>
            <person name="Li Z."/>
            <person name="Ahmad N."/>
            <person name="Liu X."/>
        </authorList>
    </citation>
    <scope>FUNCTION</scope>
    <scope>PHOSPHORYLATION AT SER-556 AND SER-1098</scope>
    <scope>SUBCELLULAR LOCATION</scope>
    <scope>MUTAGENESIS OF SER-556 AND SER-1098</scope>
</reference>
<proteinExistence type="evidence at protein level"/>
<organism>
    <name type="scientific">Mus musculus</name>
    <name type="common">Mouse</name>
    <dbReference type="NCBI Taxonomy" id="10090"/>
    <lineage>
        <taxon>Eukaryota</taxon>
        <taxon>Metazoa</taxon>
        <taxon>Chordata</taxon>
        <taxon>Craniata</taxon>
        <taxon>Vertebrata</taxon>
        <taxon>Euteleostomi</taxon>
        <taxon>Mammalia</taxon>
        <taxon>Eutheria</taxon>
        <taxon>Euarchontoglires</taxon>
        <taxon>Glires</taxon>
        <taxon>Rodentia</taxon>
        <taxon>Myomorpha</taxon>
        <taxon>Muroidea</taxon>
        <taxon>Muridae</taxon>
        <taxon>Murinae</taxon>
        <taxon>Mus</taxon>
        <taxon>Mus</taxon>
    </lineage>
</organism>